<proteinExistence type="evidence at transcript level"/>
<name>CXA4_BOVIN</name>
<sequence>MGDWGFLEKLLDQVQEHSTVVGKIWLTVLFIFRILILGLAGESVWGDEQSDFECNTAQPGCTNVCYDQAFPISHIRYWVLQFLFVSTPTLVYLGHVIYLSRREERLRQKEGELRALPAKDPRVERALASIERQMAKISVAEDGHLRIRGALMGTYVASVLCKSVLEAGFLYGQWRLYGWTMEPVFVCQRSPCPYLVDCFVSRPTEKTIFIIFMLVVGLISLVLNLLELAYLLCRCLSRGVRARQRQDAPPAPGTSSEPYADQVFFYLPMSEGPSSPPCPTYNGLSSSEQNWANLTTEERLASSRAPLFLDPPPQTGRKSPSRPSSSASKKQYV</sequence>
<accession>A4IFL1</accession>
<dbReference type="EMBL" id="BC134629">
    <property type="protein sequence ID" value="AAI34630.1"/>
    <property type="molecule type" value="mRNA"/>
</dbReference>
<dbReference type="RefSeq" id="NP_001077207.1">
    <property type="nucleotide sequence ID" value="NM_001083738.1"/>
</dbReference>
<dbReference type="RefSeq" id="XP_059740757.1">
    <property type="nucleotide sequence ID" value="XM_059884774.1"/>
</dbReference>
<dbReference type="SMR" id="A4IFL1"/>
<dbReference type="FunCoup" id="A4IFL1">
    <property type="interactions" value="153"/>
</dbReference>
<dbReference type="STRING" id="9913.ENSBTAP00000018428"/>
<dbReference type="PaxDb" id="9913-ENSBTAP00000018428"/>
<dbReference type="GeneID" id="538913"/>
<dbReference type="KEGG" id="bta:538913"/>
<dbReference type="CTD" id="2701"/>
<dbReference type="VEuPathDB" id="HostDB:ENSBTAG00000013881"/>
<dbReference type="eggNOG" id="ENOG502QU20">
    <property type="taxonomic scope" value="Eukaryota"/>
</dbReference>
<dbReference type="HOGENOM" id="CLU_037388_4_2_1"/>
<dbReference type="InParanoid" id="A4IFL1"/>
<dbReference type="OMA" id="MWTYIIS"/>
<dbReference type="OrthoDB" id="9993956at2759"/>
<dbReference type="Reactome" id="R-BTA-190861">
    <property type="pathway name" value="Gap junction assembly"/>
</dbReference>
<dbReference type="Proteomes" id="UP000009136">
    <property type="component" value="Chromosome 3"/>
</dbReference>
<dbReference type="Bgee" id="ENSBTAG00000013881">
    <property type="expression patterns" value="Expressed in bone marrow and 100 other cell types or tissues"/>
</dbReference>
<dbReference type="GO" id="GO:0005922">
    <property type="term" value="C:connexin complex"/>
    <property type="evidence" value="ECO:0000318"/>
    <property type="project" value="GO_Central"/>
</dbReference>
<dbReference type="GO" id="GO:0005243">
    <property type="term" value="F:gap junction channel activity"/>
    <property type="evidence" value="ECO:0000318"/>
    <property type="project" value="GO_Central"/>
</dbReference>
<dbReference type="GO" id="GO:0007267">
    <property type="term" value="P:cell-cell signaling"/>
    <property type="evidence" value="ECO:0000318"/>
    <property type="project" value="GO_Central"/>
</dbReference>
<dbReference type="FunFam" id="1.20.1440.80:FF:000001">
    <property type="entry name" value="Gap junction alpha-1"/>
    <property type="match status" value="1"/>
</dbReference>
<dbReference type="Gene3D" id="1.20.1440.80">
    <property type="entry name" value="Gap junction channel protein cysteine-rich domain"/>
    <property type="match status" value="1"/>
</dbReference>
<dbReference type="InterPro" id="IPR000500">
    <property type="entry name" value="Connexin"/>
</dbReference>
<dbReference type="InterPro" id="IPR002263">
    <property type="entry name" value="Connexin37"/>
</dbReference>
<dbReference type="InterPro" id="IPR019570">
    <property type="entry name" value="Connexin_CCC"/>
</dbReference>
<dbReference type="InterPro" id="IPR017990">
    <property type="entry name" value="Connexin_CS"/>
</dbReference>
<dbReference type="InterPro" id="IPR013092">
    <property type="entry name" value="Connexin_N"/>
</dbReference>
<dbReference type="InterPro" id="IPR038359">
    <property type="entry name" value="Connexin_N_sf"/>
</dbReference>
<dbReference type="PANTHER" id="PTHR11984">
    <property type="entry name" value="CONNEXIN"/>
    <property type="match status" value="1"/>
</dbReference>
<dbReference type="PANTHER" id="PTHR11984:SF54">
    <property type="entry name" value="GAP JUNCTION ALPHA-4 PROTEIN"/>
    <property type="match status" value="1"/>
</dbReference>
<dbReference type="Pfam" id="PF00029">
    <property type="entry name" value="Connexin"/>
    <property type="match status" value="1"/>
</dbReference>
<dbReference type="PRINTS" id="PR00206">
    <property type="entry name" value="CONNEXIN"/>
</dbReference>
<dbReference type="PRINTS" id="PR01134">
    <property type="entry name" value="CONNEXINA4"/>
</dbReference>
<dbReference type="SMART" id="SM00037">
    <property type="entry name" value="CNX"/>
    <property type="match status" value="1"/>
</dbReference>
<dbReference type="SMART" id="SM01089">
    <property type="entry name" value="Connexin_CCC"/>
    <property type="match status" value="1"/>
</dbReference>
<dbReference type="PROSITE" id="PS00407">
    <property type="entry name" value="CONNEXINS_1"/>
    <property type="match status" value="1"/>
</dbReference>
<dbReference type="PROSITE" id="PS00408">
    <property type="entry name" value="CONNEXINS_2"/>
    <property type="match status" value="1"/>
</dbReference>
<protein>
    <recommendedName>
        <fullName>Gap junction alpha-4 protein</fullName>
    </recommendedName>
    <alternativeName>
        <fullName>Connexin-37</fullName>
        <shortName>Cx37</shortName>
    </alternativeName>
</protein>
<reference key="1">
    <citation type="submission" date="2007-03" db="EMBL/GenBank/DDBJ databases">
        <authorList>
            <consortium name="NIH - Mammalian Gene Collection (MGC) project"/>
        </authorList>
    </citation>
    <scope>NUCLEOTIDE SEQUENCE [LARGE SCALE MRNA]</scope>
    <source>
        <strain>Hereford</strain>
        <tissue>Fetal skin</tissue>
    </source>
</reference>
<organism>
    <name type="scientific">Bos taurus</name>
    <name type="common">Bovine</name>
    <dbReference type="NCBI Taxonomy" id="9913"/>
    <lineage>
        <taxon>Eukaryota</taxon>
        <taxon>Metazoa</taxon>
        <taxon>Chordata</taxon>
        <taxon>Craniata</taxon>
        <taxon>Vertebrata</taxon>
        <taxon>Euteleostomi</taxon>
        <taxon>Mammalia</taxon>
        <taxon>Eutheria</taxon>
        <taxon>Laurasiatheria</taxon>
        <taxon>Artiodactyla</taxon>
        <taxon>Ruminantia</taxon>
        <taxon>Pecora</taxon>
        <taxon>Bovidae</taxon>
        <taxon>Bovinae</taxon>
        <taxon>Bos</taxon>
    </lineage>
</organism>
<keyword id="KW-0965">Cell junction</keyword>
<keyword id="KW-1003">Cell membrane</keyword>
<keyword id="KW-0303">Gap junction</keyword>
<keyword id="KW-0472">Membrane</keyword>
<keyword id="KW-1185">Reference proteome</keyword>
<keyword id="KW-0812">Transmembrane</keyword>
<keyword id="KW-1133">Transmembrane helix</keyword>
<gene>
    <name type="primary">GJA4</name>
</gene>
<evidence type="ECO:0000250" key="1"/>
<evidence type="ECO:0000255" key="2"/>
<evidence type="ECO:0000256" key="3">
    <source>
        <dbReference type="SAM" id="MobiDB-lite"/>
    </source>
</evidence>
<evidence type="ECO:0000305" key="4"/>
<comment type="function">
    <text evidence="1">One gap junction consists of a cluster of closely packed pairs of transmembrane channels, the connexons, through which materials of low MW diffuse from one cell to a neighboring cell.</text>
</comment>
<comment type="subunit">
    <text evidence="1">A connexon is composed of a hexamer of connexins.</text>
</comment>
<comment type="subcellular location">
    <subcellularLocation>
        <location evidence="1">Cell membrane</location>
        <topology evidence="1">Multi-pass membrane protein</topology>
    </subcellularLocation>
    <subcellularLocation>
        <location evidence="1">Cell junction</location>
        <location evidence="1">Gap junction</location>
    </subcellularLocation>
</comment>
<comment type="similarity">
    <text evidence="4">Belongs to the connexin family. Alpha-type (group II) subfamily.</text>
</comment>
<feature type="chain" id="PRO_0000313004" description="Gap junction alpha-4 protein">
    <location>
        <begin position="1"/>
        <end position="333"/>
    </location>
</feature>
<feature type="topological domain" description="Cytoplasmic" evidence="2">
    <location>
        <begin position="1"/>
        <end position="20"/>
    </location>
</feature>
<feature type="transmembrane region" description="Helical" evidence="2">
    <location>
        <begin position="21"/>
        <end position="40"/>
    </location>
</feature>
<feature type="topological domain" description="Extracellular" evidence="2">
    <location>
        <begin position="41"/>
        <end position="76"/>
    </location>
</feature>
<feature type="transmembrane region" description="Helical" evidence="2">
    <location>
        <begin position="77"/>
        <end position="99"/>
    </location>
</feature>
<feature type="topological domain" description="Cytoplasmic" evidence="2">
    <location>
        <begin position="100"/>
        <end position="148"/>
    </location>
</feature>
<feature type="transmembrane region" description="Helical" evidence="2">
    <location>
        <begin position="149"/>
        <end position="165"/>
    </location>
</feature>
<feature type="topological domain" description="Extracellular" evidence="2">
    <location>
        <begin position="166"/>
        <end position="207"/>
    </location>
</feature>
<feature type="transmembrane region" description="Helical" evidence="2">
    <location>
        <begin position="208"/>
        <end position="230"/>
    </location>
</feature>
<feature type="topological domain" description="Cytoplasmic" evidence="2">
    <location>
        <begin position="231"/>
        <end position="333"/>
    </location>
</feature>
<feature type="region of interest" description="Disordered" evidence="3">
    <location>
        <begin position="303"/>
        <end position="333"/>
    </location>
</feature>
<feature type="compositionally biased region" description="Low complexity" evidence="3">
    <location>
        <begin position="317"/>
        <end position="333"/>
    </location>
</feature>